<evidence type="ECO:0000250" key="1">
    <source>
        <dbReference type="UniProtKB" id="P42743"/>
    </source>
</evidence>
<evidence type="ECO:0000255" key="2">
    <source>
        <dbReference type="PROSITE-ProRule" id="PRU00388"/>
    </source>
</evidence>
<evidence type="ECO:0000256" key="3">
    <source>
        <dbReference type="SAM" id="MobiDB-lite"/>
    </source>
</evidence>
<reference key="1">
    <citation type="journal article" date="1999" name="Nature">
        <title>Sequence and analysis of chromosome 2 of the plant Arabidopsis thaliana.</title>
        <authorList>
            <person name="Lin X."/>
            <person name="Kaul S."/>
            <person name="Rounsley S.D."/>
            <person name="Shea T.P."/>
            <person name="Benito M.-I."/>
            <person name="Town C.D."/>
            <person name="Fujii C.Y."/>
            <person name="Mason T.M."/>
            <person name="Bowman C.L."/>
            <person name="Barnstead M.E."/>
            <person name="Feldblyum T.V."/>
            <person name="Buell C.R."/>
            <person name="Ketchum K.A."/>
            <person name="Lee J.J."/>
            <person name="Ronning C.M."/>
            <person name="Koo H.L."/>
            <person name="Moffat K.S."/>
            <person name="Cronin L.A."/>
            <person name="Shen M."/>
            <person name="Pai G."/>
            <person name="Van Aken S."/>
            <person name="Umayam L."/>
            <person name="Tallon L.J."/>
            <person name="Gill J.E."/>
            <person name="Adams M.D."/>
            <person name="Carrera A.J."/>
            <person name="Creasy T.H."/>
            <person name="Goodman H.M."/>
            <person name="Somerville C.R."/>
            <person name="Copenhaver G.P."/>
            <person name="Preuss D."/>
            <person name="Nierman W.C."/>
            <person name="White O."/>
            <person name="Eisen J.A."/>
            <person name="Salzberg S.L."/>
            <person name="Fraser C.M."/>
            <person name="Venter J.C."/>
        </authorList>
    </citation>
    <scope>NUCLEOTIDE SEQUENCE [LARGE SCALE GENOMIC DNA]</scope>
    <source>
        <strain>cv. Columbia</strain>
    </source>
</reference>
<reference key="2">
    <citation type="journal article" date="2017" name="Plant J.">
        <title>Araport11: a complete reannotation of the Arabidopsis thaliana reference genome.</title>
        <authorList>
            <person name="Cheng C.Y."/>
            <person name="Krishnakumar V."/>
            <person name="Chan A.P."/>
            <person name="Thibaud-Nissen F."/>
            <person name="Schobel S."/>
            <person name="Town C.D."/>
        </authorList>
    </citation>
    <scope>GENOME REANNOTATION</scope>
    <source>
        <strain>cv. Columbia</strain>
    </source>
</reference>
<reference key="3">
    <citation type="journal article" date="2009" name="J. Proteomics">
        <title>Phosphoproteomic analysis of nuclei-enriched fractions from Arabidopsis thaliana.</title>
        <authorList>
            <person name="Jones A.M.E."/>
            <person name="MacLean D."/>
            <person name="Studholme D.J."/>
            <person name="Serna-Sanz A."/>
            <person name="Andreasson E."/>
            <person name="Rathjen J.P."/>
            <person name="Peck S.C."/>
        </authorList>
    </citation>
    <scope>IDENTIFICATION BY MASS SPECTROMETRY [LARGE SCALE ANALYSIS]</scope>
    <source>
        <strain>cv. Columbia</strain>
    </source>
</reference>
<keyword id="KW-0067">ATP-binding</keyword>
<keyword id="KW-0547">Nucleotide-binding</keyword>
<keyword id="KW-1185">Reference proteome</keyword>
<keyword id="KW-0808">Transferase</keyword>
<keyword id="KW-0833">Ubl conjugation pathway</keyword>
<dbReference type="EC" id="2.3.2.23"/>
<dbReference type="EMBL" id="AC005167">
    <property type="protein sequence ID" value="AAC64223.1"/>
    <property type="molecule type" value="Genomic_DNA"/>
</dbReference>
<dbReference type="EMBL" id="CP002685">
    <property type="protein sequence ID" value="AEC06554.1"/>
    <property type="molecule type" value="Genomic_DNA"/>
</dbReference>
<dbReference type="EMBL" id="CP002685">
    <property type="protein sequence ID" value="ANM62201.1"/>
    <property type="molecule type" value="Genomic_DNA"/>
</dbReference>
<dbReference type="PIR" id="H84545">
    <property type="entry name" value="H84545"/>
</dbReference>
<dbReference type="RefSeq" id="NP_001324377.1">
    <property type="nucleotide sequence ID" value="NM_001335502.1"/>
</dbReference>
<dbReference type="RefSeq" id="NP_179284.1">
    <property type="nucleotide sequence ID" value="NM_127245.3"/>
</dbReference>
<dbReference type="SMR" id="Q9ZVX1"/>
<dbReference type="FunCoup" id="Q9ZVX1">
    <property type="interactions" value="3662"/>
</dbReference>
<dbReference type="STRING" id="3702.Q9ZVX1"/>
<dbReference type="iPTMnet" id="Q9ZVX1"/>
<dbReference type="PaxDb" id="3702-AT2G16920.1"/>
<dbReference type="ProteomicsDB" id="228627"/>
<dbReference type="EnsemblPlants" id="AT2G16920.1">
    <property type="protein sequence ID" value="AT2G16920.1"/>
    <property type="gene ID" value="AT2G16920"/>
</dbReference>
<dbReference type="EnsemblPlants" id="AT2G16920.2">
    <property type="protein sequence ID" value="AT2G16920.2"/>
    <property type="gene ID" value="AT2G16920"/>
</dbReference>
<dbReference type="GeneID" id="816195"/>
<dbReference type="Gramene" id="AT2G16920.1">
    <property type="protein sequence ID" value="AT2G16920.1"/>
    <property type="gene ID" value="AT2G16920"/>
</dbReference>
<dbReference type="Gramene" id="AT2G16920.2">
    <property type="protein sequence ID" value="AT2G16920.2"/>
    <property type="gene ID" value="AT2G16920"/>
</dbReference>
<dbReference type="KEGG" id="ath:AT2G16920"/>
<dbReference type="Araport" id="AT2G16920"/>
<dbReference type="TAIR" id="AT2G16920">
    <property type="gene designation" value="UBC23"/>
</dbReference>
<dbReference type="eggNOG" id="KOG0895">
    <property type="taxonomic scope" value="Eukaryota"/>
</dbReference>
<dbReference type="HOGENOM" id="CLU_002088_0_0_1"/>
<dbReference type="InParanoid" id="Q9ZVX1"/>
<dbReference type="OMA" id="WVKGFED"/>
<dbReference type="PhylomeDB" id="Q9ZVX1"/>
<dbReference type="UniPathway" id="UPA00143"/>
<dbReference type="PRO" id="PR:Q9ZVX1"/>
<dbReference type="Proteomes" id="UP000006548">
    <property type="component" value="Chromosome 2"/>
</dbReference>
<dbReference type="ExpressionAtlas" id="Q9ZVX1">
    <property type="expression patterns" value="baseline and differential"/>
</dbReference>
<dbReference type="GO" id="GO:0005524">
    <property type="term" value="F:ATP binding"/>
    <property type="evidence" value="ECO:0007669"/>
    <property type="project" value="UniProtKB-KW"/>
</dbReference>
<dbReference type="GO" id="GO:0061631">
    <property type="term" value="F:ubiquitin conjugating enzyme activity"/>
    <property type="evidence" value="ECO:0007669"/>
    <property type="project" value="UniProtKB-EC"/>
</dbReference>
<dbReference type="GO" id="GO:0016567">
    <property type="term" value="P:protein ubiquitination"/>
    <property type="evidence" value="ECO:0007669"/>
    <property type="project" value="UniProtKB-UniPathway"/>
</dbReference>
<dbReference type="CDD" id="cd23837">
    <property type="entry name" value="UBCc_UBE2O"/>
    <property type="match status" value="1"/>
</dbReference>
<dbReference type="FunFam" id="3.10.110.10:FF:000028">
    <property type="entry name" value="Probable ubiquitin-conjugating enzyme E2 23"/>
    <property type="match status" value="1"/>
</dbReference>
<dbReference type="Gene3D" id="3.10.110.10">
    <property type="entry name" value="Ubiquitin Conjugating Enzyme"/>
    <property type="match status" value="1"/>
</dbReference>
<dbReference type="InterPro" id="IPR000608">
    <property type="entry name" value="UBQ-conjugat_E2_core"/>
</dbReference>
<dbReference type="InterPro" id="IPR016135">
    <property type="entry name" value="UBQ-conjugating_enzyme/RWD"/>
</dbReference>
<dbReference type="PANTHER" id="PTHR46116">
    <property type="entry name" value="(E3-INDEPENDENT) E2 UBIQUITIN-CONJUGATING ENZYME"/>
    <property type="match status" value="1"/>
</dbReference>
<dbReference type="PANTHER" id="PTHR46116:SF21">
    <property type="entry name" value="UBIQUITIN-CONJUGATING ENZYME E2 23-RELATED"/>
    <property type="match status" value="1"/>
</dbReference>
<dbReference type="Pfam" id="PF23048">
    <property type="entry name" value="SH3-A_UBE2O"/>
    <property type="match status" value="1"/>
</dbReference>
<dbReference type="Pfam" id="PF23043">
    <property type="entry name" value="SH3-B_UBE2O"/>
    <property type="match status" value="1"/>
</dbReference>
<dbReference type="Pfam" id="PF23044">
    <property type="entry name" value="SH3-C_UBE2O"/>
    <property type="match status" value="1"/>
</dbReference>
<dbReference type="Pfam" id="PF23046">
    <property type="entry name" value="tSH3-B_UBE2O"/>
    <property type="match status" value="1"/>
</dbReference>
<dbReference type="Pfam" id="PF00179">
    <property type="entry name" value="UQ_con"/>
    <property type="match status" value="1"/>
</dbReference>
<dbReference type="SMART" id="SM00212">
    <property type="entry name" value="UBCc"/>
    <property type="match status" value="1"/>
</dbReference>
<dbReference type="SUPFAM" id="SSF54495">
    <property type="entry name" value="UBC-like"/>
    <property type="match status" value="1"/>
</dbReference>
<dbReference type="PROSITE" id="PS50127">
    <property type="entry name" value="UBC_2"/>
    <property type="match status" value="1"/>
</dbReference>
<proteinExistence type="evidence at protein level"/>
<gene>
    <name type="primary">UBC23</name>
    <name type="ordered locus">At2g16920</name>
    <name type="ORF">F12A24.10</name>
</gene>
<accession>Q9ZVX1</accession>
<comment type="function">
    <text evidence="1">Accepts the ubiquitin from the E1 complex and catalyzes its covalent attachment to other proteins.</text>
</comment>
<comment type="catalytic activity">
    <reaction evidence="2">
        <text>S-ubiquitinyl-[E1 ubiquitin-activating enzyme]-L-cysteine + [E2 ubiquitin-conjugating enzyme]-L-cysteine = [E1 ubiquitin-activating enzyme]-L-cysteine + S-ubiquitinyl-[E2 ubiquitin-conjugating enzyme]-L-cysteine.</text>
        <dbReference type="EC" id="2.3.2.23"/>
    </reaction>
</comment>
<comment type="pathway">
    <text evidence="2">Protein modification; protein ubiquitination.</text>
</comment>
<comment type="similarity">
    <text evidence="2">Belongs to the ubiquitin-conjugating enzyme family.</text>
</comment>
<name>UBC23_ARATH</name>
<feature type="chain" id="PRO_0000345189" description="Probable ubiquitin-conjugating enzyme E2 23">
    <location>
        <begin position="1"/>
        <end position="1102"/>
    </location>
</feature>
<feature type="domain" description="UBC core" evidence="2">
    <location>
        <begin position="850"/>
        <end position="1010"/>
    </location>
</feature>
<feature type="region of interest" description="Disordered" evidence="3">
    <location>
        <begin position="1"/>
        <end position="20"/>
    </location>
</feature>
<feature type="region of interest" description="Disordered" evidence="3">
    <location>
        <begin position="25"/>
        <end position="111"/>
    </location>
</feature>
<feature type="region of interest" description="Disordered" evidence="3">
    <location>
        <begin position="396"/>
        <end position="418"/>
    </location>
</feature>
<feature type="region of interest" description="Disordered" evidence="3">
    <location>
        <begin position="579"/>
        <end position="602"/>
    </location>
</feature>
<feature type="region of interest" description="Disordered" evidence="3">
    <location>
        <begin position="661"/>
        <end position="710"/>
    </location>
</feature>
<feature type="region of interest" description="Disordered" evidence="3">
    <location>
        <begin position="760"/>
        <end position="800"/>
    </location>
</feature>
<feature type="compositionally biased region" description="Basic and acidic residues" evidence="3">
    <location>
        <begin position="31"/>
        <end position="44"/>
    </location>
</feature>
<feature type="compositionally biased region" description="Acidic residues" evidence="3">
    <location>
        <begin position="59"/>
        <end position="88"/>
    </location>
</feature>
<feature type="compositionally biased region" description="Polar residues" evidence="3">
    <location>
        <begin position="579"/>
        <end position="596"/>
    </location>
</feature>
<feature type="compositionally biased region" description="Polar residues" evidence="3">
    <location>
        <begin position="779"/>
        <end position="800"/>
    </location>
</feature>
<feature type="active site" description="Glycyl thioester intermediate" evidence="2">
    <location>
        <position position="936"/>
    </location>
</feature>
<organism>
    <name type="scientific">Arabidopsis thaliana</name>
    <name type="common">Mouse-ear cress</name>
    <dbReference type="NCBI Taxonomy" id="3702"/>
    <lineage>
        <taxon>Eukaryota</taxon>
        <taxon>Viridiplantae</taxon>
        <taxon>Streptophyta</taxon>
        <taxon>Embryophyta</taxon>
        <taxon>Tracheophyta</taxon>
        <taxon>Spermatophyta</taxon>
        <taxon>Magnoliopsida</taxon>
        <taxon>eudicotyledons</taxon>
        <taxon>Gunneridae</taxon>
        <taxon>Pentapetalae</taxon>
        <taxon>rosids</taxon>
        <taxon>malvids</taxon>
        <taxon>Brassicales</taxon>
        <taxon>Brassicaceae</taxon>
        <taxon>Camelineae</taxon>
        <taxon>Arabidopsis</taxon>
    </lineage>
</organism>
<protein>
    <recommendedName>
        <fullName>Probable ubiquitin-conjugating enzyme E2 23</fullName>
        <ecNumber>2.3.2.23</ecNumber>
    </recommendedName>
    <alternativeName>
        <fullName>E2 ubiquitin-conjugating enzyme 23</fullName>
    </alternativeName>
    <alternativeName>
        <fullName>Ubiquitin carrier protein 23</fullName>
    </alternativeName>
</protein>
<sequence>MEHEQDDPGTSTNVGVDSSVDDSMASLSICDSEHPNIYRQDIVKNKKTGSVGVVSEVAGDSDSDSDISDEEEDDDDDEDNDDDDEDVEEGKKASEENVVNGDGEKKADGNYKCGALEGDQIRVLWMDNTEPVQDINDVTVIDRGFLHGDYVASASEPTGQVGVVVDVNISVDLLAPDGSIHKDISTKNLKRVRDFAVGDYVVHGPWLGRIDDVLDNVTVLFDDGSMCKVLRVEPLRLKPIPKNNLEEDANFPYYPGQRVKASSSSVFKNSRWLSGLWKPNRLEGTVTKVTAGSIFVYWIASAGFGPDSSVSPPEEQNPSNLTLLSCFTHANWQVGDWCLLPSLNQSATIPLHKHVSKLRLYDSQADRQQKIGRDLEDVQDEVSGKVEPAGITAEALPKVTSDDPPQRNPSVSKEPVHEPWPLHRKKIRKLVIRKDKKVKKKEESFEQALLVVNSRTRVDVSWQDGTIECRREAITLIPIETPGDHEFVSEQYVVEKTSDDGDNTTEPRRAGVVKNVNAKDRTASVRWLNPLRRAEEPREFEKEEIVSVYELEGHPDYDYCYGDVVVRLSPIAVALPASSPGNSFEEATQQDNGYQDSESHQEAKILVDKEENEPSTDLSKLSWVGNITGLKDGDIEVTWADGTISTVGPHAVYVVGRDDDDESVAGESETSDAASWETLNDDDRGAPEIPEEDLGRSSSIEGNSDADIYAENDSGRNGALALPLAAIEFVTRLASGIFSRARKSVDSSSSDYTVENVYKQAESTNPSDETDSLDDPSPSKVNVTDNCESKGTQANAKNILSGETSTFLEDEDKPVPSEGDSCSFRRFDISQDPLDHHFLGVDGQKTKERQWFKKVDQDWKILQNNLPDGIFVRAYEDRMDLLRAVIVGAFGTPYQDGLFFFDFHLPSDYPSVPPSAYYHSGGWRLNPNLYEEGKVCLSLLNTWTGRGNEVWDPKSSSILQVLVSLQGLVLNSKPYFNEAGYDKQVGTAEGEKNSLGYNENTFLLNCKTMMYLMRKPPKDFEELIKDHFRKRGYYILKACDAYMKGYLIGSLTKDASVIDERSSANSTSVGFKLMLAKIAPKLFSALSEVGADCNEFQHLQQQ</sequence>